<keyword id="KW-1015">Disulfide bond</keyword>
<keyword id="KW-0325">Glycoprotein</keyword>
<keyword id="KW-0326">Glycosidase</keyword>
<keyword id="KW-0378">Hydrolase</keyword>
<keyword id="KW-0458">Lysosome</keyword>
<keyword id="KW-1185">Reference proteome</keyword>
<keyword id="KW-0732">Signal</keyword>
<comment type="function">
    <text evidence="4 7">Essential lysosomal hydrolase responsible for the degradation of glycosaminoglycans (GAG) such as heparan sulfate (Probable). Required for lysosome function and autophagy (PubMed:35011691). Consequently, has an essential role in the development, maintenance and function of various cells, tissues, and organs, including the muscles and the central nervous system (CNS) (PubMed:35011691).</text>
</comment>
<comment type="catalytic activity">
    <reaction evidence="7">
        <text>Hydrolysis of unsulfated alpha-L-iduronosidic linkages in dermatan sulfate.</text>
        <dbReference type="EC" id="3.2.1.76"/>
    </reaction>
</comment>
<comment type="subcellular location">
    <subcellularLocation>
        <location evidence="1">Lysosome</location>
    </subcellularLocation>
</comment>
<comment type="disruption phenotype">
    <text evidence="4">RNAi-mediated knockdown results in dysregulated glycolysis and lipogenesis, and is pupal lethal (PubMed:35011691). RNAi-mediated knockdown causes the incorrect acidification of lysosomes leading to dysfunctional lysosome-autophagosome fusion and consequently, blocks autophagy flux (PubMed:35011691). RNAi-mediated knockdown results in a significant increase in the number and size of lysosomes in the brain (PubMed:35011691). Expression levels of genes involved in glycolysis (Pfk, Tpi and Ldh) and lipogenesis (ACC) are increased (PubMed:35011691). Conditional RNAi-mediated knockdown causes developmental defects leading to premature death at different stages, depending on the tissue and on the extent of the expression reduction (PubMed:35011691). RNAi-mediated knockdown in muscles results in complete lethality at the pupal stage, knockdown in glial cells results in partial lethality at the pupal stage (about 73% of flies reach the adult stage), whereas knockdown in neurons is not lethal (PubMed:35011691). Conditional RNAi-mediated knockdown in the muscles results in a significant increase in the number and size of lysosomes in the muscles (PubMed:35011691). RNAi-mediated knockdown in glial cells and also in neurons, causes an age-dependent climbing decline and increases adult lifespan (PubMed:35011691).</text>
</comment>
<comment type="similarity">
    <text evidence="6">Belongs to the glycosyl hydrolase 39 family.</text>
</comment>
<organism evidence="10">
    <name type="scientific">Drosophila melanogaster</name>
    <name type="common">Fruit fly</name>
    <dbReference type="NCBI Taxonomy" id="7227"/>
    <lineage>
        <taxon>Eukaryota</taxon>
        <taxon>Metazoa</taxon>
        <taxon>Ecdysozoa</taxon>
        <taxon>Arthropoda</taxon>
        <taxon>Hexapoda</taxon>
        <taxon>Insecta</taxon>
        <taxon>Pterygota</taxon>
        <taxon>Neoptera</taxon>
        <taxon>Endopterygota</taxon>
        <taxon>Diptera</taxon>
        <taxon>Brachycera</taxon>
        <taxon>Muscomorpha</taxon>
        <taxon>Ephydroidea</taxon>
        <taxon>Drosophilidae</taxon>
        <taxon>Drosophila</taxon>
        <taxon>Sophophora</taxon>
    </lineage>
</organism>
<gene>
    <name evidence="5 9" type="primary">Idua</name>
    <name evidence="9" type="ORF">CG6201</name>
</gene>
<name>IDUA_DROME</name>
<feature type="signal peptide" evidence="2">
    <location>
        <begin position="1"/>
        <end position="16"/>
    </location>
</feature>
<feature type="chain" id="PRO_5015100414" description="Alpha-L-iduronidase" evidence="2">
    <location>
        <begin position="17"/>
        <end position="636"/>
    </location>
</feature>
<feature type="active site" description="Proton donor" evidence="1">
    <location>
        <position position="170"/>
    </location>
</feature>
<feature type="active site" description="Nucleophile" evidence="1">
    <location>
        <position position="293"/>
    </location>
</feature>
<feature type="binding site" evidence="1">
    <location>
        <position position="39"/>
    </location>
    <ligand>
        <name>alpha-D-mannopyranose</name>
        <dbReference type="ChEBI" id="CHEBI:28729"/>
    </ligand>
</feature>
<feature type="binding site" evidence="1">
    <location>
        <position position="43"/>
    </location>
    <ligand>
        <name>alpha-D-mannopyranose</name>
        <dbReference type="ChEBI" id="CHEBI:28729"/>
    </ligand>
</feature>
<feature type="binding site" evidence="1">
    <location>
        <position position="45"/>
    </location>
    <ligand>
        <name>alpha-D-mannopyranose</name>
        <dbReference type="ChEBI" id="CHEBI:28729"/>
    </ligand>
</feature>
<feature type="binding site" evidence="1">
    <location>
        <position position="78"/>
    </location>
    <ligand>
        <name>alpha-L-iduronate</name>
        <dbReference type="ChEBI" id="CHEBI:193037"/>
    </ligand>
</feature>
<feature type="binding site" evidence="1">
    <location>
        <position position="169"/>
    </location>
    <ligand>
        <name>alpha-L-iduronate</name>
        <dbReference type="ChEBI" id="CHEBI:193037"/>
    </ligand>
</feature>
<feature type="binding site" evidence="1">
    <location>
        <position position="170"/>
    </location>
    <ligand>
        <name>alpha-L-iduronate</name>
        <dbReference type="ChEBI" id="CHEBI:193037"/>
    </ligand>
</feature>
<feature type="binding site" evidence="1">
    <location>
        <position position="257"/>
    </location>
    <ligand>
        <name>alpha-L-iduronate</name>
        <dbReference type="ChEBI" id="CHEBI:193037"/>
    </ligand>
</feature>
<feature type="binding site" evidence="1">
    <location>
        <position position="293"/>
    </location>
    <ligand>
        <name>alpha-L-iduronate</name>
        <dbReference type="ChEBI" id="CHEBI:193037"/>
    </ligand>
</feature>
<feature type="binding site" evidence="1">
    <location>
        <position position="299"/>
    </location>
    <ligand>
        <name>alpha-L-iduronate</name>
        <dbReference type="ChEBI" id="CHEBI:193037"/>
    </ligand>
</feature>
<feature type="binding site" evidence="1">
    <location>
        <position position="300"/>
    </location>
    <ligand>
        <name>alpha-D-mannopyranose</name>
        <dbReference type="ChEBI" id="CHEBI:28729"/>
    </ligand>
</feature>
<feature type="binding site" evidence="1">
    <location>
        <position position="342"/>
    </location>
    <ligand>
        <name>alpha-L-iduronate</name>
        <dbReference type="ChEBI" id="CHEBI:193037"/>
    </ligand>
</feature>
<feature type="binding site" evidence="1">
    <location>
        <position position="356"/>
    </location>
    <ligand>
        <name>alpha-L-iduronate</name>
        <dbReference type="ChEBI" id="CHEBI:193037"/>
    </ligand>
</feature>
<feature type="glycosylation site" description="N-linked (GlcNAc...) asparagine" evidence="3">
    <location>
        <position position="180"/>
    </location>
</feature>
<feature type="glycosylation site" description="N-linked (GlcNAc...) asparagine" evidence="3">
    <location>
        <position position="268"/>
    </location>
</feature>
<feature type="glycosylation site" description="N-linked (GlcNAc...) asparagine" evidence="3">
    <location>
        <position position="365"/>
    </location>
</feature>
<feature type="glycosylation site" description="N-linked (GlcNAc...) asparagine" evidence="3">
    <location>
        <position position="448"/>
    </location>
</feature>
<feature type="glycosylation site" description="N-linked (GlcNAc...) asparagine" evidence="3">
    <location>
        <position position="453"/>
    </location>
</feature>
<feature type="glycosylation site" description="N-linked (GlcNAc...) asparagine" evidence="3">
    <location>
        <position position="483"/>
    </location>
</feature>
<feature type="glycosylation site" description="N-linked (GlcNAc...) asparagine" evidence="3">
    <location>
        <position position="622"/>
    </location>
</feature>
<feature type="disulfide bond" evidence="1">
    <location>
        <begin position="529"/>
        <end position="565"/>
    </location>
</feature>
<proteinExistence type="evidence at protein level"/>
<evidence type="ECO:0000250" key="1">
    <source>
        <dbReference type="UniProtKB" id="P35475"/>
    </source>
</evidence>
<evidence type="ECO:0000255" key="2"/>
<evidence type="ECO:0000255" key="3">
    <source>
        <dbReference type="PROSITE-ProRule" id="PRU00498"/>
    </source>
</evidence>
<evidence type="ECO:0000269" key="4">
    <source>
    </source>
</evidence>
<evidence type="ECO:0000303" key="5">
    <source>
    </source>
</evidence>
<evidence type="ECO:0000305" key="6"/>
<evidence type="ECO:0000305" key="7">
    <source>
    </source>
</evidence>
<evidence type="ECO:0000312" key="8">
    <source>
        <dbReference type="EMBL" id="AAQ22532.1"/>
    </source>
</evidence>
<evidence type="ECO:0000312" key="9">
    <source>
        <dbReference type="FlyBase" id="FBgn0032343"/>
    </source>
</evidence>
<evidence type="ECO:0000312" key="10">
    <source>
        <dbReference type="Proteomes" id="UP000000803"/>
    </source>
</evidence>
<accession>Q9VKJ8</accession>
<dbReference type="EC" id="3.2.1.76" evidence="7"/>
<dbReference type="EMBL" id="AE014134">
    <property type="protein sequence ID" value="AAF53070.2"/>
    <property type="molecule type" value="Genomic_DNA"/>
</dbReference>
<dbReference type="EMBL" id="BT010063">
    <property type="protein sequence ID" value="AAQ22532.1"/>
    <property type="molecule type" value="mRNA"/>
</dbReference>
<dbReference type="RefSeq" id="NP_609489.1">
    <property type="nucleotide sequence ID" value="NM_135645.2"/>
</dbReference>
<dbReference type="SMR" id="Q9VKJ8"/>
<dbReference type="FunCoup" id="Q9VKJ8">
    <property type="interactions" value="142"/>
</dbReference>
<dbReference type="IntAct" id="Q9VKJ8">
    <property type="interactions" value="2"/>
</dbReference>
<dbReference type="STRING" id="7227.FBpp0079816"/>
<dbReference type="CAZy" id="GH39">
    <property type="family name" value="Glycoside Hydrolase Family 39"/>
</dbReference>
<dbReference type="GlyGen" id="Q9VKJ8">
    <property type="glycosylation" value="7 sites"/>
</dbReference>
<dbReference type="PaxDb" id="7227-FBpp0079816"/>
<dbReference type="DNASU" id="34544"/>
<dbReference type="EnsemblMetazoa" id="FBtr0080229">
    <property type="protein sequence ID" value="FBpp0079816"/>
    <property type="gene ID" value="FBgn0032343"/>
</dbReference>
<dbReference type="GeneID" id="34544"/>
<dbReference type="KEGG" id="dme:Dmel_CG6201"/>
<dbReference type="UCSC" id="CG6201-RA">
    <property type="organism name" value="d. melanogaster"/>
</dbReference>
<dbReference type="AGR" id="FB:FBgn0032343"/>
<dbReference type="CTD" id="3425"/>
<dbReference type="FlyBase" id="FBgn0032343">
    <property type="gene designation" value="Idua"/>
</dbReference>
<dbReference type="VEuPathDB" id="VectorBase:FBgn0032343"/>
<dbReference type="eggNOG" id="ENOG502QRES">
    <property type="taxonomic scope" value="Eukaryota"/>
</dbReference>
<dbReference type="GeneTree" id="ENSGT00390000015494"/>
<dbReference type="HOGENOM" id="CLU_028716_0_0_1"/>
<dbReference type="InParanoid" id="Q9VKJ8"/>
<dbReference type="OMA" id="RYETWNE"/>
<dbReference type="OrthoDB" id="15153at2759"/>
<dbReference type="Reactome" id="R-DME-2024096">
    <property type="pathway name" value="HS-GAG degradation"/>
</dbReference>
<dbReference type="Reactome" id="R-DME-2024101">
    <property type="pathway name" value="CS/DS degradation"/>
</dbReference>
<dbReference type="BioGRID-ORCS" id="34544">
    <property type="hits" value="0 hits in 1 CRISPR screen"/>
</dbReference>
<dbReference type="GenomeRNAi" id="34544"/>
<dbReference type="PRO" id="PR:Q9VKJ8"/>
<dbReference type="Proteomes" id="UP000000803">
    <property type="component" value="Chromosome 2L"/>
</dbReference>
<dbReference type="Bgee" id="FBgn0032343">
    <property type="expression patterns" value="Expressed in T neuron T4d (Drosophila) in embryonic/larval optic lobe (Drosophila) and 28 other cell types or tissues"/>
</dbReference>
<dbReference type="GO" id="GO:0005764">
    <property type="term" value="C:lysosome"/>
    <property type="evidence" value="ECO:0000250"/>
    <property type="project" value="FlyBase"/>
</dbReference>
<dbReference type="GO" id="GO:0003940">
    <property type="term" value="F:L-iduronidase activity"/>
    <property type="evidence" value="ECO:0000314"/>
    <property type="project" value="FlyBase"/>
</dbReference>
<dbReference type="GO" id="GO:0005975">
    <property type="term" value="P:carbohydrate metabolic process"/>
    <property type="evidence" value="ECO:0007669"/>
    <property type="project" value="InterPro"/>
</dbReference>
<dbReference type="GO" id="GO:0030200">
    <property type="term" value="P:heparan sulfate proteoglycan catabolic process"/>
    <property type="evidence" value="ECO:0000250"/>
    <property type="project" value="FlyBase"/>
</dbReference>
<dbReference type="FunFam" id="3.20.20.80:FF:000245">
    <property type="entry name" value="Histone H2B"/>
    <property type="match status" value="1"/>
</dbReference>
<dbReference type="FunFam" id="2.60.40.10:FF:003061">
    <property type="entry name" value="Uncharacterized protein, isoform A"/>
    <property type="match status" value="1"/>
</dbReference>
<dbReference type="Gene3D" id="3.20.20.80">
    <property type="entry name" value="Glycosidases"/>
    <property type="match status" value="1"/>
</dbReference>
<dbReference type="Gene3D" id="2.60.40.10">
    <property type="entry name" value="Immunoglobulins"/>
    <property type="match status" value="1"/>
</dbReference>
<dbReference type="InterPro" id="IPR049167">
    <property type="entry name" value="GH39_C"/>
</dbReference>
<dbReference type="InterPro" id="IPR049166">
    <property type="entry name" value="GH39_cat"/>
</dbReference>
<dbReference type="InterPro" id="IPR000514">
    <property type="entry name" value="Glyco_hydro_39"/>
</dbReference>
<dbReference type="InterPro" id="IPR017853">
    <property type="entry name" value="Glycoside_hydrolase_SF"/>
</dbReference>
<dbReference type="InterPro" id="IPR051923">
    <property type="entry name" value="Glycosyl_Hydrolase_39"/>
</dbReference>
<dbReference type="InterPro" id="IPR013783">
    <property type="entry name" value="Ig-like_fold"/>
</dbReference>
<dbReference type="PANTHER" id="PTHR12631">
    <property type="entry name" value="ALPHA-L-IDURONIDASE"/>
    <property type="match status" value="1"/>
</dbReference>
<dbReference type="PANTHER" id="PTHR12631:SF8">
    <property type="entry name" value="ALPHA-L-IDURONIDASE"/>
    <property type="match status" value="1"/>
</dbReference>
<dbReference type="Pfam" id="PF01229">
    <property type="entry name" value="Glyco_hydro_39"/>
    <property type="match status" value="1"/>
</dbReference>
<dbReference type="Pfam" id="PF21200">
    <property type="entry name" value="Glyco_hydro_39_C"/>
    <property type="match status" value="1"/>
</dbReference>
<dbReference type="PRINTS" id="PR00745">
    <property type="entry name" value="GLHYDRLASE39"/>
</dbReference>
<dbReference type="SUPFAM" id="SSF51445">
    <property type="entry name" value="(Trans)glycosidases"/>
    <property type="match status" value="1"/>
</dbReference>
<dbReference type="SUPFAM" id="SSF51011">
    <property type="entry name" value="Glycosyl hydrolase domain"/>
    <property type="match status" value="1"/>
</dbReference>
<sequence>MLSLLLVLTTLARIHAHYTSGDVVYHTMPHFWTGVGFCPAGRIDHEGISAALGDPALRLNLRLIAALPVGAVTHIRIHWLLELIQFWQYDPSGIPIYDFSKFDDFIDFLHEELRLSPVLEWMGNLGGVFSENPMQQSFYWEHLVKTTINHQIARHGSSRLVNWRYETWNEPDLRGYNKQNFTAHTFLDYVQAVRRGLSKAGNLDNQDGKVPLPMYRSLRGPAGLFKDSNHPLCWNLLELCSQRVVYCPIDILTFHRKGIEGTATEIVNGSLSLMAKIYEEYPNLKQLPVANDEADPVAGWSTSRDFQADVRYGITLISTVMQFWHAKLAGGPLSRLESISHDNAFLSYHPHEFTQRTLLAHFRMNETKPPHSQLVQKPVYAALGMLAKLGTRAADVEMVNMDTKHSVQVLRTVSGGLGGPGQYMATIFLSPEEAGPKMTAFHHKYTLNMSIANESAFVTELLVPKETDPYYIWQQAGSPAYPNATLREAMRRAQAPRLYKTGPIWQYNSELVINSASIPLPWAMLLRVCSASWPKLRRPQQLSIAEVTQREVFISWMEHPKSTQCLLSYEVWFKERDNLGRSADWMLISQGWHLPYPSFQYAPGDKGSVNGFYKVRGVDVFNETSPYSQIVEYLEL</sequence>
<protein>
    <recommendedName>
        <fullName evidence="5">Alpha-L-iduronidase</fullName>
        <ecNumber evidence="7">3.2.1.76</ecNumber>
    </recommendedName>
    <alternativeName>
        <fullName evidence="5">D-idua</fullName>
    </alternativeName>
</protein>
<reference evidence="10" key="1">
    <citation type="journal article" date="2000" name="Science">
        <title>The genome sequence of Drosophila melanogaster.</title>
        <authorList>
            <person name="Adams M.D."/>
            <person name="Celniker S.E."/>
            <person name="Holt R.A."/>
            <person name="Evans C.A."/>
            <person name="Gocayne J.D."/>
            <person name="Amanatides P.G."/>
            <person name="Scherer S.E."/>
            <person name="Li P.W."/>
            <person name="Hoskins R.A."/>
            <person name="Galle R.F."/>
            <person name="George R.A."/>
            <person name="Lewis S.E."/>
            <person name="Richards S."/>
            <person name="Ashburner M."/>
            <person name="Henderson S.N."/>
            <person name="Sutton G.G."/>
            <person name="Wortman J.R."/>
            <person name="Yandell M.D."/>
            <person name="Zhang Q."/>
            <person name="Chen L.X."/>
            <person name="Brandon R.C."/>
            <person name="Rogers Y.-H.C."/>
            <person name="Blazej R.G."/>
            <person name="Champe M."/>
            <person name="Pfeiffer B.D."/>
            <person name="Wan K.H."/>
            <person name="Doyle C."/>
            <person name="Baxter E.G."/>
            <person name="Helt G."/>
            <person name="Nelson C.R."/>
            <person name="Miklos G.L.G."/>
            <person name="Abril J.F."/>
            <person name="Agbayani A."/>
            <person name="An H.-J."/>
            <person name="Andrews-Pfannkoch C."/>
            <person name="Baldwin D."/>
            <person name="Ballew R.M."/>
            <person name="Basu A."/>
            <person name="Baxendale J."/>
            <person name="Bayraktaroglu L."/>
            <person name="Beasley E.M."/>
            <person name="Beeson K.Y."/>
            <person name="Benos P.V."/>
            <person name="Berman B.P."/>
            <person name="Bhandari D."/>
            <person name="Bolshakov S."/>
            <person name="Borkova D."/>
            <person name="Botchan M.R."/>
            <person name="Bouck J."/>
            <person name="Brokstein P."/>
            <person name="Brottier P."/>
            <person name="Burtis K.C."/>
            <person name="Busam D.A."/>
            <person name="Butler H."/>
            <person name="Cadieu E."/>
            <person name="Center A."/>
            <person name="Chandra I."/>
            <person name="Cherry J.M."/>
            <person name="Cawley S."/>
            <person name="Dahlke C."/>
            <person name="Davenport L.B."/>
            <person name="Davies P."/>
            <person name="de Pablos B."/>
            <person name="Delcher A."/>
            <person name="Deng Z."/>
            <person name="Mays A.D."/>
            <person name="Dew I."/>
            <person name="Dietz S.M."/>
            <person name="Dodson K."/>
            <person name="Doup L.E."/>
            <person name="Downes M."/>
            <person name="Dugan-Rocha S."/>
            <person name="Dunkov B.C."/>
            <person name="Dunn P."/>
            <person name="Durbin K.J."/>
            <person name="Evangelista C.C."/>
            <person name="Ferraz C."/>
            <person name="Ferriera S."/>
            <person name="Fleischmann W."/>
            <person name="Fosler C."/>
            <person name="Gabrielian A.E."/>
            <person name="Garg N.S."/>
            <person name="Gelbart W.M."/>
            <person name="Glasser K."/>
            <person name="Glodek A."/>
            <person name="Gong F."/>
            <person name="Gorrell J.H."/>
            <person name="Gu Z."/>
            <person name="Guan P."/>
            <person name="Harris M."/>
            <person name="Harris N.L."/>
            <person name="Harvey D.A."/>
            <person name="Heiman T.J."/>
            <person name="Hernandez J.R."/>
            <person name="Houck J."/>
            <person name="Hostin D."/>
            <person name="Houston K.A."/>
            <person name="Howland T.J."/>
            <person name="Wei M.-H."/>
            <person name="Ibegwam C."/>
            <person name="Jalali M."/>
            <person name="Kalush F."/>
            <person name="Karpen G.H."/>
            <person name="Ke Z."/>
            <person name="Kennison J.A."/>
            <person name="Ketchum K.A."/>
            <person name="Kimmel B.E."/>
            <person name="Kodira C.D."/>
            <person name="Kraft C.L."/>
            <person name="Kravitz S."/>
            <person name="Kulp D."/>
            <person name="Lai Z."/>
            <person name="Lasko P."/>
            <person name="Lei Y."/>
            <person name="Levitsky A.A."/>
            <person name="Li J.H."/>
            <person name="Li Z."/>
            <person name="Liang Y."/>
            <person name="Lin X."/>
            <person name="Liu X."/>
            <person name="Mattei B."/>
            <person name="McIntosh T.C."/>
            <person name="McLeod M.P."/>
            <person name="McPherson D."/>
            <person name="Merkulov G."/>
            <person name="Milshina N.V."/>
            <person name="Mobarry C."/>
            <person name="Morris J."/>
            <person name="Moshrefi A."/>
            <person name="Mount S.M."/>
            <person name="Moy M."/>
            <person name="Murphy B."/>
            <person name="Murphy L."/>
            <person name="Muzny D.M."/>
            <person name="Nelson D.L."/>
            <person name="Nelson D.R."/>
            <person name="Nelson K.A."/>
            <person name="Nixon K."/>
            <person name="Nusskern D.R."/>
            <person name="Pacleb J.M."/>
            <person name="Palazzolo M."/>
            <person name="Pittman G.S."/>
            <person name="Pan S."/>
            <person name="Pollard J."/>
            <person name="Puri V."/>
            <person name="Reese M.G."/>
            <person name="Reinert K."/>
            <person name="Remington K."/>
            <person name="Saunders R.D.C."/>
            <person name="Scheeler F."/>
            <person name="Shen H."/>
            <person name="Shue B.C."/>
            <person name="Siden-Kiamos I."/>
            <person name="Simpson M."/>
            <person name="Skupski M.P."/>
            <person name="Smith T.J."/>
            <person name="Spier E."/>
            <person name="Spradling A.C."/>
            <person name="Stapleton M."/>
            <person name="Strong R."/>
            <person name="Sun E."/>
            <person name="Svirskas R."/>
            <person name="Tector C."/>
            <person name="Turner R."/>
            <person name="Venter E."/>
            <person name="Wang A.H."/>
            <person name="Wang X."/>
            <person name="Wang Z.-Y."/>
            <person name="Wassarman D.A."/>
            <person name="Weinstock G.M."/>
            <person name="Weissenbach J."/>
            <person name="Williams S.M."/>
            <person name="Woodage T."/>
            <person name="Worley K.C."/>
            <person name="Wu D."/>
            <person name="Yang S."/>
            <person name="Yao Q.A."/>
            <person name="Ye J."/>
            <person name="Yeh R.-F."/>
            <person name="Zaveri J.S."/>
            <person name="Zhan M."/>
            <person name="Zhang G."/>
            <person name="Zhao Q."/>
            <person name="Zheng L."/>
            <person name="Zheng X.H."/>
            <person name="Zhong F.N."/>
            <person name="Zhong W."/>
            <person name="Zhou X."/>
            <person name="Zhu S.C."/>
            <person name="Zhu X."/>
            <person name="Smith H.O."/>
            <person name="Gibbs R.A."/>
            <person name="Myers E.W."/>
            <person name="Rubin G.M."/>
            <person name="Venter J.C."/>
        </authorList>
    </citation>
    <scope>NUCLEOTIDE SEQUENCE [LARGE SCALE GENOMIC DNA]</scope>
    <source>
        <strain evidence="10">Berkeley</strain>
    </source>
</reference>
<reference evidence="10" key="2">
    <citation type="journal article" date="2002" name="Genome Biol.">
        <title>Annotation of the Drosophila melanogaster euchromatic genome: a systematic review.</title>
        <authorList>
            <person name="Misra S."/>
            <person name="Crosby M.A."/>
            <person name="Mungall C.J."/>
            <person name="Matthews B.B."/>
            <person name="Campbell K.S."/>
            <person name="Hradecky P."/>
            <person name="Huang Y."/>
            <person name="Kaminker J.S."/>
            <person name="Millburn G.H."/>
            <person name="Prochnik S.E."/>
            <person name="Smith C.D."/>
            <person name="Tupy J.L."/>
            <person name="Whitfield E.J."/>
            <person name="Bayraktaroglu L."/>
            <person name="Berman B.P."/>
            <person name="Bettencourt B.R."/>
            <person name="Celniker S.E."/>
            <person name="de Grey A.D.N.J."/>
            <person name="Drysdale R.A."/>
            <person name="Harris N.L."/>
            <person name="Richter J."/>
            <person name="Russo S."/>
            <person name="Schroeder A.J."/>
            <person name="Shu S.Q."/>
            <person name="Stapleton M."/>
            <person name="Yamada C."/>
            <person name="Ashburner M."/>
            <person name="Gelbart W.M."/>
            <person name="Rubin G.M."/>
            <person name="Lewis S.E."/>
        </authorList>
    </citation>
    <scope>GENOME REANNOTATION</scope>
    <source>
        <strain evidence="10">Berkeley</strain>
    </source>
</reference>
<reference evidence="8" key="3">
    <citation type="submission" date="2003-08" db="EMBL/GenBank/DDBJ databases">
        <authorList>
            <person name="Stapleton M."/>
            <person name="Brokstein P."/>
            <person name="Hong L."/>
            <person name="Agbayani A."/>
            <person name="Carlson J."/>
            <person name="Champe M."/>
            <person name="Chavez C."/>
            <person name="Dorsett V."/>
            <person name="Dresnek D."/>
            <person name="Farfan D."/>
            <person name="Frise E."/>
            <person name="George R."/>
            <person name="Gonzalez M."/>
            <person name="Guarin H."/>
            <person name="Kronmiller B."/>
            <person name="Li P."/>
            <person name="Liao G."/>
            <person name="Miranda A."/>
            <person name="Mungall C.J."/>
            <person name="Nunoo J."/>
            <person name="Pacleb J."/>
            <person name="Paragas V."/>
            <person name="Park S."/>
            <person name="Patel S."/>
            <person name="Phouanenavong S."/>
            <person name="Wan K."/>
            <person name="Yu C."/>
            <person name="Lewis S.E."/>
            <person name="Rubin G.M."/>
            <person name="Celniker S."/>
        </authorList>
    </citation>
    <scope>NUCLEOTIDE SEQUENCE [LARGE SCALE MRNA]</scope>
    <source>
        <strain evidence="8">Berkeley</strain>
        <tissue evidence="8">Embryo</tissue>
    </source>
</reference>
<reference evidence="6" key="4">
    <citation type="journal article" date="2021" name="Cells">
        <title>Drosophila D-idua Reduction Mimics Mucopolysaccharidosis Type I Disease-Related Phenotypes.</title>
        <authorList>
            <person name="De Filippis C."/>
            <person name="Napoli B."/>
            <person name="Rigon L."/>
            <person name="Guarato G."/>
            <person name="Bauer R."/>
            <person name="Tomanin R."/>
            <person name="Orso G."/>
        </authorList>
    </citation>
    <scope>FUNCTION</scope>
    <scope>CATALYTIC ACTIVITY</scope>
    <scope>DISRUPTION PHENOTYPE</scope>
</reference>